<organism>
    <name type="scientific">Aspergillus fumigatus (strain ATCC MYA-4609 / CBS 101355 / FGSC A1100 / Af293)</name>
    <name type="common">Neosartorya fumigata</name>
    <dbReference type="NCBI Taxonomy" id="330879"/>
    <lineage>
        <taxon>Eukaryota</taxon>
        <taxon>Fungi</taxon>
        <taxon>Dikarya</taxon>
        <taxon>Ascomycota</taxon>
        <taxon>Pezizomycotina</taxon>
        <taxon>Eurotiomycetes</taxon>
        <taxon>Eurotiomycetidae</taxon>
        <taxon>Eurotiales</taxon>
        <taxon>Aspergillaceae</taxon>
        <taxon>Aspergillus</taxon>
        <taxon>Aspergillus subgen. Fumigati</taxon>
    </lineage>
</organism>
<feature type="chain" id="PRO_0000394654" description="Beta-mannosidase B">
    <location>
        <begin position="1"/>
        <end position="845"/>
    </location>
</feature>
<feature type="active site" description="Proton donor" evidence="1">
    <location>
        <position position="432"/>
    </location>
</feature>
<feature type="glycosylation site" description="N-linked (GlcNAc...) asparagine" evidence="2">
    <location>
        <position position="252"/>
    </location>
</feature>
<feature type="glycosylation site" description="N-linked (GlcNAc...) asparagine" evidence="2">
    <location>
        <position position="717"/>
    </location>
</feature>
<feature type="glycosylation site" description="N-linked (GlcNAc...) asparagine" evidence="2">
    <location>
        <position position="723"/>
    </location>
</feature>
<evidence type="ECO:0000250" key="1"/>
<evidence type="ECO:0000255" key="2"/>
<evidence type="ECO:0000305" key="3"/>
<accession>Q4WAH4</accession>
<proteinExistence type="inferred from homology"/>
<protein>
    <recommendedName>
        <fullName>Beta-mannosidase B</fullName>
        <ecNumber>3.2.1.25</ecNumber>
    </recommendedName>
    <alternativeName>
        <fullName>Mannanase B</fullName>
        <shortName>Mannase B</shortName>
    </alternativeName>
</protein>
<name>MANBB_ASPFU</name>
<keyword id="KW-0119">Carbohydrate metabolism</keyword>
<keyword id="KW-0325">Glycoprotein</keyword>
<keyword id="KW-0326">Glycosidase</keyword>
<keyword id="KW-0378">Hydrolase</keyword>
<keyword id="KW-0624">Polysaccharide degradation</keyword>
<keyword id="KW-1185">Reference proteome</keyword>
<gene>
    <name type="primary">mndB</name>
    <name type="ORF">AFUA_7G01320</name>
</gene>
<reference key="1">
    <citation type="journal article" date="2005" name="Nature">
        <title>Genomic sequence of the pathogenic and allergenic filamentous fungus Aspergillus fumigatus.</title>
        <authorList>
            <person name="Nierman W.C."/>
            <person name="Pain A."/>
            <person name="Anderson M.J."/>
            <person name="Wortman J.R."/>
            <person name="Kim H.S."/>
            <person name="Arroyo J."/>
            <person name="Berriman M."/>
            <person name="Abe K."/>
            <person name="Archer D.B."/>
            <person name="Bermejo C."/>
            <person name="Bennett J.W."/>
            <person name="Bowyer P."/>
            <person name="Chen D."/>
            <person name="Collins M."/>
            <person name="Coulsen R."/>
            <person name="Davies R."/>
            <person name="Dyer P.S."/>
            <person name="Farman M.L."/>
            <person name="Fedorova N."/>
            <person name="Fedorova N.D."/>
            <person name="Feldblyum T.V."/>
            <person name="Fischer R."/>
            <person name="Fosker N."/>
            <person name="Fraser A."/>
            <person name="Garcia J.L."/>
            <person name="Garcia M.J."/>
            <person name="Goble A."/>
            <person name="Goldman G.H."/>
            <person name="Gomi K."/>
            <person name="Griffith-Jones S."/>
            <person name="Gwilliam R."/>
            <person name="Haas B.J."/>
            <person name="Haas H."/>
            <person name="Harris D.E."/>
            <person name="Horiuchi H."/>
            <person name="Huang J."/>
            <person name="Humphray S."/>
            <person name="Jimenez J."/>
            <person name="Keller N."/>
            <person name="Khouri H."/>
            <person name="Kitamoto K."/>
            <person name="Kobayashi T."/>
            <person name="Konzack S."/>
            <person name="Kulkarni R."/>
            <person name="Kumagai T."/>
            <person name="Lafton A."/>
            <person name="Latge J.-P."/>
            <person name="Li W."/>
            <person name="Lord A."/>
            <person name="Lu C."/>
            <person name="Majoros W.H."/>
            <person name="May G.S."/>
            <person name="Miller B.L."/>
            <person name="Mohamoud Y."/>
            <person name="Molina M."/>
            <person name="Monod M."/>
            <person name="Mouyna I."/>
            <person name="Mulligan S."/>
            <person name="Murphy L.D."/>
            <person name="O'Neil S."/>
            <person name="Paulsen I."/>
            <person name="Penalva M.A."/>
            <person name="Pertea M."/>
            <person name="Price C."/>
            <person name="Pritchard B.L."/>
            <person name="Quail M.A."/>
            <person name="Rabbinowitsch E."/>
            <person name="Rawlins N."/>
            <person name="Rajandream M.A."/>
            <person name="Reichard U."/>
            <person name="Renauld H."/>
            <person name="Robson G.D."/>
            <person name="Rodriguez de Cordoba S."/>
            <person name="Rodriguez-Pena J.M."/>
            <person name="Ronning C.M."/>
            <person name="Rutter S."/>
            <person name="Salzberg S.L."/>
            <person name="Sanchez M."/>
            <person name="Sanchez-Ferrero J.C."/>
            <person name="Saunders D."/>
            <person name="Seeger K."/>
            <person name="Squares R."/>
            <person name="Squares S."/>
            <person name="Takeuchi M."/>
            <person name="Tekaia F."/>
            <person name="Turner G."/>
            <person name="Vazquez de Aldana C.R."/>
            <person name="Weidman J."/>
            <person name="White O."/>
            <person name="Woodward J.R."/>
            <person name="Yu J.-H."/>
            <person name="Fraser C.M."/>
            <person name="Galagan J.E."/>
            <person name="Asai K."/>
            <person name="Machida M."/>
            <person name="Hall N."/>
            <person name="Barrell B.G."/>
            <person name="Denning D.W."/>
        </authorList>
    </citation>
    <scope>NUCLEOTIDE SEQUENCE [LARGE SCALE GENOMIC DNA]</scope>
    <source>
        <strain>ATCC MYA-4609 / CBS 101355 / FGSC A1100 / Af293</strain>
    </source>
</reference>
<sequence length="845" mass="96998">MSKLQQFPLSKGWSFRDNEATSEDAWMPVPVVPSVVHQDLQANNKLKDPYIGFNELEARWVNEKSWTYKTVFQKPAAPAGSCIVLAFDGLDTFAKVKLDGNVILENDNMFLARRVDVTKALEAEGDHVLEIDFDCAFLRAKELRKQDPRHNWASFNGDPSRLSVRKAQYHWGWDWGPVLMTAGIWREVRLEVYSARVADLWTEVQLASDHQSAQVTAFVEVESVHSGSHRACFTLSLHGQEITREEIGVTENGTAKATFDVKEPSLWWPHGYGDATLYEVSVSLVKEQEELHRVSKKFGIRTAEVIQRPDKHGKSFFFRVNGVDIFCGGSCWIPADNLLPSITAERYRKWIELMVHGRQVMIRVWGGGIYEDNSFYDACDELGVLVWQDFMFGCGNYPTWPNLLESIRKESVYNVRRLRHHPSIVIWVGNNEDYQVQEQAGLTYNYEDKDPENWLKTDFPARYIYEKLLPEVVQEYSPGTFYHPGSPWGDGKTTSDPTVGDMHQWNVWHGTQEKYQIFDTLGGRFNSEFGMEAFPHMSTIDYFVENEADKYPQSHVLDFHNKADGHERRIATYLVENLRTATDLETHIYLTQVVQAETMMFGYRGWRRQWGDERHCGGALLWQLNDCWPTISWAIVDYFLRPKPAFYAVARVLNPIAVGVRREHHDWSVTHAQPPKTSKFELWVASSRQQEIQGTVELRFLSVNTGLEVRERIVHENVSIVPNGTTNLIVDGLIDHTVHSEPHVLAARIWVDGQLVARDVDWPQPFKYLDLSDRGLEVKKISESEDEQTLLISTKKPVKCLVFEEREGVRISDSAMDIVPGDDQRVTIKGLKPGDAPLKYKFLGQ</sequence>
<dbReference type="EC" id="3.2.1.25"/>
<dbReference type="EMBL" id="AAHF01000015">
    <property type="protein sequence ID" value="EAL84762.1"/>
    <property type="molecule type" value="Genomic_DNA"/>
</dbReference>
<dbReference type="RefSeq" id="XP_746800.1">
    <property type="nucleotide sequence ID" value="XM_741707.1"/>
</dbReference>
<dbReference type="SMR" id="Q4WAH4"/>
<dbReference type="STRING" id="330879.Q4WAH4"/>
<dbReference type="GlyCosmos" id="Q4WAH4">
    <property type="glycosylation" value="3 sites, No reported glycans"/>
</dbReference>
<dbReference type="EnsemblFungi" id="EAL84762">
    <property type="protein sequence ID" value="EAL84762"/>
    <property type="gene ID" value="AFUA_7G01320"/>
</dbReference>
<dbReference type="GeneID" id="3504183"/>
<dbReference type="KEGG" id="afm:AFUA_7G01320"/>
<dbReference type="VEuPathDB" id="FungiDB:Afu7g01320"/>
<dbReference type="eggNOG" id="KOG2230">
    <property type="taxonomic scope" value="Eukaryota"/>
</dbReference>
<dbReference type="HOGENOM" id="CLU_005015_1_0_1"/>
<dbReference type="InParanoid" id="Q4WAH4"/>
<dbReference type="OMA" id="MFANFDY"/>
<dbReference type="OrthoDB" id="2866996at2759"/>
<dbReference type="UniPathway" id="UPA00280"/>
<dbReference type="Proteomes" id="UP000002530">
    <property type="component" value="Chromosome 7"/>
</dbReference>
<dbReference type="GO" id="GO:0004567">
    <property type="term" value="F:beta-mannosidase activity"/>
    <property type="evidence" value="ECO:0000318"/>
    <property type="project" value="GO_Central"/>
</dbReference>
<dbReference type="GO" id="GO:0006516">
    <property type="term" value="P:glycoprotein catabolic process"/>
    <property type="evidence" value="ECO:0000318"/>
    <property type="project" value="GO_Central"/>
</dbReference>
<dbReference type="GO" id="GO:0000272">
    <property type="term" value="P:polysaccharide catabolic process"/>
    <property type="evidence" value="ECO:0007669"/>
    <property type="project" value="UniProtKB-KW"/>
</dbReference>
<dbReference type="FunFam" id="2.60.120.260:FF:000118">
    <property type="entry name" value="Beta-mannosidase B"/>
    <property type="match status" value="1"/>
</dbReference>
<dbReference type="FunFam" id="3.20.20.80:FF:000050">
    <property type="entry name" value="Beta-mannosidase B"/>
    <property type="match status" value="1"/>
</dbReference>
<dbReference type="FunFam" id="2.60.40.10:FF:001725">
    <property type="entry name" value="Exo-beta-D-glucosaminidase"/>
    <property type="match status" value="1"/>
</dbReference>
<dbReference type="Gene3D" id="2.60.120.260">
    <property type="entry name" value="Galactose-binding domain-like"/>
    <property type="match status" value="1"/>
</dbReference>
<dbReference type="Gene3D" id="3.20.20.80">
    <property type="entry name" value="Glycosidases"/>
    <property type="match status" value="1"/>
</dbReference>
<dbReference type="Gene3D" id="2.60.40.10">
    <property type="entry name" value="Immunoglobulins"/>
    <property type="match status" value="1"/>
</dbReference>
<dbReference type="InterPro" id="IPR036156">
    <property type="entry name" value="Beta-gal/glucu_dom_sf"/>
</dbReference>
<dbReference type="InterPro" id="IPR054593">
    <property type="entry name" value="Beta-mannosidase-like_N2"/>
</dbReference>
<dbReference type="InterPro" id="IPR050887">
    <property type="entry name" value="Beta-mannosidase_GH2"/>
</dbReference>
<dbReference type="InterPro" id="IPR008979">
    <property type="entry name" value="Galactose-bd-like_sf"/>
</dbReference>
<dbReference type="InterPro" id="IPR006102">
    <property type="entry name" value="Glyco_hydro_2_Ig-like"/>
</dbReference>
<dbReference type="InterPro" id="IPR017853">
    <property type="entry name" value="Glycoside_hydrolase_SF"/>
</dbReference>
<dbReference type="InterPro" id="IPR013783">
    <property type="entry name" value="Ig-like_fold"/>
</dbReference>
<dbReference type="InterPro" id="IPR041447">
    <property type="entry name" value="Mannosidase_ig"/>
</dbReference>
<dbReference type="PANTHER" id="PTHR43730">
    <property type="entry name" value="BETA-MANNOSIDASE"/>
    <property type="match status" value="1"/>
</dbReference>
<dbReference type="PANTHER" id="PTHR43730:SF1">
    <property type="entry name" value="BETA-MANNOSIDASE"/>
    <property type="match status" value="1"/>
</dbReference>
<dbReference type="Pfam" id="PF00703">
    <property type="entry name" value="Glyco_hydro_2"/>
    <property type="match status" value="1"/>
</dbReference>
<dbReference type="Pfam" id="PF22666">
    <property type="entry name" value="Glyco_hydro_2_N2"/>
    <property type="match status" value="1"/>
</dbReference>
<dbReference type="Pfam" id="PF17786">
    <property type="entry name" value="Mannosidase_ig"/>
    <property type="match status" value="1"/>
</dbReference>
<dbReference type="SUPFAM" id="SSF51445">
    <property type="entry name" value="(Trans)glycosidases"/>
    <property type="match status" value="1"/>
</dbReference>
<dbReference type="SUPFAM" id="SSF49303">
    <property type="entry name" value="beta-Galactosidase/glucuronidase domain"/>
    <property type="match status" value="2"/>
</dbReference>
<dbReference type="SUPFAM" id="SSF49785">
    <property type="entry name" value="Galactose-binding domain-like"/>
    <property type="match status" value="1"/>
</dbReference>
<comment type="function">
    <text evidence="1">Exoglycosidase that cleaves the single beta-linked mannose residue from the non-reducing end of beta-mannosidic oligosaccharides of various complexity and length. Prefers mannobiose over mannotriose and has no activity against polymeric mannan. Is also severely restricted by galactosyl substitutions at the +1 subsite (By similarity).</text>
</comment>
<comment type="catalytic activity">
    <reaction>
        <text>Hydrolysis of terminal, non-reducing beta-D-mannose residues in beta-D-mannosides.</text>
        <dbReference type="EC" id="3.2.1.25"/>
    </reaction>
</comment>
<comment type="pathway">
    <text>Glycan metabolism; N-glycan degradation.</text>
</comment>
<comment type="miscellaneous">
    <text evidence="1">In contrast to clade A beta-mannosidases, which are likely secreted, clade B proteins appear to be intracellular.</text>
</comment>
<comment type="similarity">
    <text evidence="3">Belongs to the glycosyl hydrolase 2 family. Beta-mannosidase B subfamily.</text>
</comment>